<protein>
    <recommendedName>
        <fullName>DNA recombination protein RmuC homolog</fullName>
    </recommendedName>
</protein>
<comment type="function">
    <text evidence="1">Involved in DNA recombination.</text>
</comment>
<comment type="similarity">
    <text evidence="3">Belongs to the RmuC family.</text>
</comment>
<accession>Q9Z6S7</accession>
<dbReference type="EMBL" id="AE001363">
    <property type="protein sequence ID" value="AAD19119.1"/>
    <property type="molecule type" value="Genomic_DNA"/>
</dbReference>
<dbReference type="EMBL" id="AE002161">
    <property type="protein sequence ID" value="AAF38663.1"/>
    <property type="molecule type" value="Genomic_DNA"/>
</dbReference>
<dbReference type="EMBL" id="BA000008">
    <property type="protein sequence ID" value="BAA99189.1"/>
    <property type="molecule type" value="Genomic_DNA"/>
</dbReference>
<dbReference type="EMBL" id="AE009440">
    <property type="protein sequence ID" value="AAP98948.1"/>
    <property type="molecule type" value="Genomic_DNA"/>
</dbReference>
<dbReference type="PIR" id="B72012">
    <property type="entry name" value="B72012"/>
</dbReference>
<dbReference type="PIR" id="C86613">
    <property type="entry name" value="C86613"/>
</dbReference>
<dbReference type="RefSeq" id="NP_225176.1">
    <property type="nucleotide sequence ID" value="NC_000922.1"/>
</dbReference>
<dbReference type="RefSeq" id="WP_010883615.1">
    <property type="nucleotide sequence ID" value="NZ_LN847257.1"/>
</dbReference>
<dbReference type="SMR" id="Q9Z6S7"/>
<dbReference type="STRING" id="406984.CPK_ORF00407"/>
<dbReference type="GeneID" id="45051038"/>
<dbReference type="KEGG" id="cpa:CP_0874"/>
<dbReference type="KEGG" id="cpj:yigN"/>
<dbReference type="KEGG" id="cpn:CPn_0982"/>
<dbReference type="KEGG" id="cpt:CpB1019"/>
<dbReference type="PATRIC" id="fig|115713.3.peg.1077"/>
<dbReference type="eggNOG" id="COG1322">
    <property type="taxonomic scope" value="Bacteria"/>
</dbReference>
<dbReference type="HOGENOM" id="CLU_024057_1_1_0"/>
<dbReference type="OrthoDB" id="370725at2"/>
<dbReference type="Proteomes" id="UP000000583">
    <property type="component" value="Chromosome"/>
</dbReference>
<dbReference type="Proteomes" id="UP000000801">
    <property type="component" value="Chromosome"/>
</dbReference>
<dbReference type="GO" id="GO:0006310">
    <property type="term" value="P:DNA recombination"/>
    <property type="evidence" value="ECO:0007669"/>
    <property type="project" value="UniProtKB-KW"/>
</dbReference>
<dbReference type="InterPro" id="IPR003798">
    <property type="entry name" value="DNA_recombination_RmuC"/>
</dbReference>
<dbReference type="PANTHER" id="PTHR30563">
    <property type="entry name" value="DNA RECOMBINATION PROTEIN RMUC"/>
    <property type="match status" value="1"/>
</dbReference>
<dbReference type="PANTHER" id="PTHR30563:SF0">
    <property type="entry name" value="DNA RECOMBINATION PROTEIN RMUC"/>
    <property type="match status" value="1"/>
</dbReference>
<dbReference type="Pfam" id="PF02646">
    <property type="entry name" value="RmuC"/>
    <property type="match status" value="1"/>
</dbReference>
<gene>
    <name type="primary">rmuC</name>
    <name type="ordered locus">CPn_0982</name>
    <name type="ordered locus">CP_0874</name>
    <name type="ordered locus">CpB1019</name>
</gene>
<keyword id="KW-0175">Coiled coil</keyword>
<keyword id="KW-0233">DNA recombination</keyword>
<reference key="1">
    <citation type="journal article" date="1999" name="Nat. Genet.">
        <title>Comparative genomes of Chlamydia pneumoniae and C. trachomatis.</title>
        <authorList>
            <person name="Kalman S."/>
            <person name="Mitchell W.P."/>
            <person name="Marathe R."/>
            <person name="Lammel C.J."/>
            <person name="Fan J."/>
            <person name="Hyman R.W."/>
            <person name="Olinger L."/>
            <person name="Grimwood J."/>
            <person name="Davis R.W."/>
            <person name="Stephens R.S."/>
        </authorList>
    </citation>
    <scope>NUCLEOTIDE SEQUENCE [LARGE SCALE GENOMIC DNA]</scope>
    <source>
        <strain>CWL029</strain>
    </source>
</reference>
<reference key="2">
    <citation type="journal article" date="2000" name="Nucleic Acids Res.">
        <title>Genome sequences of Chlamydia trachomatis MoPn and Chlamydia pneumoniae AR39.</title>
        <authorList>
            <person name="Read T.D."/>
            <person name="Brunham R.C."/>
            <person name="Shen C."/>
            <person name="Gill S.R."/>
            <person name="Heidelberg J.F."/>
            <person name="White O."/>
            <person name="Hickey E.K."/>
            <person name="Peterson J.D."/>
            <person name="Utterback T.R."/>
            <person name="Berry K.J."/>
            <person name="Bass S."/>
            <person name="Linher K.D."/>
            <person name="Weidman J.F."/>
            <person name="Khouri H.M."/>
            <person name="Craven B."/>
            <person name="Bowman C."/>
            <person name="Dodson R.J."/>
            <person name="Gwinn M.L."/>
            <person name="Nelson W.C."/>
            <person name="DeBoy R.T."/>
            <person name="Kolonay J.F."/>
            <person name="McClarty G."/>
            <person name="Salzberg S.L."/>
            <person name="Eisen J.A."/>
            <person name="Fraser C.M."/>
        </authorList>
    </citation>
    <scope>NUCLEOTIDE SEQUENCE [LARGE SCALE GENOMIC DNA]</scope>
    <source>
        <strain>AR39</strain>
    </source>
</reference>
<reference key="3">
    <citation type="journal article" date="2000" name="Nucleic Acids Res.">
        <title>Comparison of whole genome sequences of Chlamydia pneumoniae J138 from Japan and CWL029 from USA.</title>
        <authorList>
            <person name="Shirai M."/>
            <person name="Hirakawa H."/>
            <person name="Kimoto M."/>
            <person name="Tabuchi M."/>
            <person name="Kishi F."/>
            <person name="Ouchi K."/>
            <person name="Shiba T."/>
            <person name="Ishii K."/>
            <person name="Hattori M."/>
            <person name="Kuhara S."/>
            <person name="Nakazawa T."/>
        </authorList>
    </citation>
    <scope>NUCLEOTIDE SEQUENCE [LARGE SCALE GENOMIC DNA]</scope>
    <source>
        <strain>J138</strain>
    </source>
</reference>
<reference key="4">
    <citation type="submission" date="2002-05" db="EMBL/GenBank/DDBJ databases">
        <title>The genome sequence of Chlamydia pneumoniae TW183 and comparison with other Chlamydia strains based on whole genome sequence analysis.</title>
        <authorList>
            <person name="Geng M.M."/>
            <person name="Schuhmacher A."/>
            <person name="Muehldorfer I."/>
            <person name="Bensch K.W."/>
            <person name="Schaefer K.P."/>
            <person name="Schneider S."/>
            <person name="Pohl T."/>
            <person name="Essig A."/>
            <person name="Marre R."/>
            <person name="Melchers K."/>
        </authorList>
    </citation>
    <scope>NUCLEOTIDE SEQUENCE [LARGE SCALE GENOMIC DNA]</scope>
    <source>
        <strain>TW-183</strain>
    </source>
</reference>
<evidence type="ECO:0000250" key="1"/>
<evidence type="ECO:0000255" key="2"/>
<evidence type="ECO:0000305" key="3"/>
<proteinExistence type="inferred from homology"/>
<feature type="chain" id="PRO_0000202042" description="DNA recombination protein RmuC homolog">
    <location>
        <begin position="1"/>
        <end position="411"/>
    </location>
</feature>
<feature type="coiled-coil region" evidence="2">
    <location>
        <begin position="26"/>
        <end position="64"/>
    </location>
</feature>
<feature type="coiled-coil region" evidence="2">
    <location>
        <begin position="123"/>
        <end position="143"/>
    </location>
</feature>
<sequence length="411" mass="47021">MNLPVSLACLLLSGCVFFLGVFVSSSLYARKKRAFLEKIQKLEHENQLLQTSLNLSRHQEQLIEDFSNRLALSSHKLIKDMKEEAQNYFGDTSKSFQSILSPIQTTLTTFKQSLETFETKHAEDRGRLKEQISQLLAVEKKLEHETHVLTDILKHPGSRGRWGEIQLERILELAGMLKYCDYDSQTTSAQGAFRADIIIRLPQDRCLIIDAKAPISDSYFSVEEIDKGDLVDKIKEHIKTLKSKSYWEKFHQSPEYVILFLPGESLFNDAIRLAPELMEIGASSNVILSSPLTLLALLKTIAYMWKQENLQKQIQEVSLLGKELHRRLQVVFTHFQKIGKNLNQTVQSYNDMTSSFQYRVLPTLRKFEGLETSSSHQIEEPTPIESLATSFPHTCDIDTNLAVIESLEKQD</sequence>
<name>RMUC_CHLPN</name>
<organism>
    <name type="scientific">Chlamydia pneumoniae</name>
    <name type="common">Chlamydophila pneumoniae</name>
    <dbReference type="NCBI Taxonomy" id="83558"/>
    <lineage>
        <taxon>Bacteria</taxon>
        <taxon>Pseudomonadati</taxon>
        <taxon>Chlamydiota</taxon>
        <taxon>Chlamydiia</taxon>
        <taxon>Chlamydiales</taxon>
        <taxon>Chlamydiaceae</taxon>
        <taxon>Chlamydia/Chlamydophila group</taxon>
        <taxon>Chlamydia</taxon>
    </lineage>
</organism>